<organism>
    <name type="scientific">Shigella flexneri</name>
    <dbReference type="NCBI Taxonomy" id="623"/>
    <lineage>
        <taxon>Bacteria</taxon>
        <taxon>Pseudomonadati</taxon>
        <taxon>Pseudomonadota</taxon>
        <taxon>Gammaproteobacteria</taxon>
        <taxon>Enterobacterales</taxon>
        <taxon>Enterobacteriaceae</taxon>
        <taxon>Shigella</taxon>
    </lineage>
</organism>
<comment type="subcellular location">
    <subcellularLocation>
        <location evidence="1">Cell membrane</location>
        <topology evidence="1">Lipid-anchor</topology>
    </subcellularLocation>
</comment>
<comment type="similarity">
    <text evidence="2">To E.coli YgdI.</text>
</comment>
<sequence length="72" mass="7877">MKKWAVIISAVGLAFAVSGCSSDYVMATKDGRMILTDGKPEIDDDTGLVSYHDQQGNAMQINRDDVSQIIER</sequence>
<dbReference type="EMBL" id="AE005674">
    <property type="protein sequence ID" value="AAN44329.1"/>
    <property type="molecule type" value="Genomic_DNA"/>
</dbReference>
<dbReference type="EMBL" id="AE014073">
    <property type="protein sequence ID" value="AAP18155.1"/>
    <property type="molecule type" value="Genomic_DNA"/>
</dbReference>
<dbReference type="RefSeq" id="NP_708622.1">
    <property type="nucleotide sequence ID" value="NC_004337.2"/>
</dbReference>
<dbReference type="RefSeq" id="WP_000758655.1">
    <property type="nucleotide sequence ID" value="NZ_WPGW01000008.1"/>
</dbReference>
<dbReference type="BMRB" id="P65297"/>
<dbReference type="SMR" id="P65297"/>
<dbReference type="STRING" id="198214.SF2843"/>
<dbReference type="PaxDb" id="198214-SF2843"/>
<dbReference type="GeneID" id="1025801"/>
<dbReference type="GeneID" id="93779165"/>
<dbReference type="KEGG" id="sfl:SF2843"/>
<dbReference type="KEGG" id="sfx:S3041"/>
<dbReference type="PATRIC" id="fig|198214.7.peg.3383"/>
<dbReference type="HOGENOM" id="CLU_182841_0_1_6"/>
<dbReference type="Proteomes" id="UP000001006">
    <property type="component" value="Chromosome"/>
</dbReference>
<dbReference type="Proteomes" id="UP000002673">
    <property type="component" value="Chromosome"/>
</dbReference>
<dbReference type="GO" id="GO:0005886">
    <property type="term" value="C:plasma membrane"/>
    <property type="evidence" value="ECO:0007669"/>
    <property type="project" value="UniProtKB-SubCell"/>
</dbReference>
<dbReference type="Gene3D" id="2.30.30.100">
    <property type="match status" value="1"/>
</dbReference>
<dbReference type="InterPro" id="IPR010920">
    <property type="entry name" value="LSM_dom_sf"/>
</dbReference>
<dbReference type="InterPro" id="IPR010305">
    <property type="entry name" value="YgdI/YgdR-like"/>
</dbReference>
<dbReference type="InterPro" id="IPR047807">
    <property type="entry name" value="YgdI/YgdR-like_SH3-like"/>
</dbReference>
<dbReference type="NCBIfam" id="NF033216">
    <property type="entry name" value="lipo_YgdI_YgdR"/>
    <property type="match status" value="1"/>
</dbReference>
<dbReference type="PANTHER" id="PTHR37011:SF1">
    <property type="entry name" value="POT FAMILY PEPTIDE TRANSPORT PROTEIN"/>
    <property type="match status" value="1"/>
</dbReference>
<dbReference type="PANTHER" id="PTHR37011">
    <property type="entry name" value="POT FAMILY PEPTIDE TRANSPORT PROTEIN-RELATED"/>
    <property type="match status" value="1"/>
</dbReference>
<dbReference type="Pfam" id="PF06004">
    <property type="entry name" value="DUF903"/>
    <property type="match status" value="1"/>
</dbReference>
<dbReference type="SUPFAM" id="SSF50182">
    <property type="entry name" value="Sm-like ribonucleoproteins"/>
    <property type="match status" value="1"/>
</dbReference>
<dbReference type="PROSITE" id="PS51257">
    <property type="entry name" value="PROKAR_LIPOPROTEIN"/>
    <property type="match status" value="1"/>
</dbReference>
<gene>
    <name type="primary">ygdR</name>
    <name type="ordered locus">SF2843</name>
    <name type="ordered locus">S3041</name>
</gene>
<feature type="signal peptide" evidence="1">
    <location>
        <begin position="1"/>
        <end position="19"/>
    </location>
</feature>
<feature type="chain" id="PRO_0000018053" description="Uncharacterized lipoprotein YgdR">
    <location>
        <begin position="20"/>
        <end position="72"/>
    </location>
</feature>
<feature type="lipid moiety-binding region" description="N-palmitoyl cysteine" evidence="1">
    <location>
        <position position="20"/>
    </location>
</feature>
<feature type="lipid moiety-binding region" description="S-diacylglycerol cysteine" evidence="1">
    <location>
        <position position="20"/>
    </location>
</feature>
<name>YGDR_SHIFL</name>
<protein>
    <recommendedName>
        <fullName>Uncharacterized lipoprotein YgdR</fullName>
    </recommendedName>
</protein>
<accession>P65297</accession>
<accession>Q46932</accession>
<proteinExistence type="inferred from homology"/>
<keyword id="KW-1003">Cell membrane</keyword>
<keyword id="KW-0449">Lipoprotein</keyword>
<keyword id="KW-0472">Membrane</keyword>
<keyword id="KW-0564">Palmitate</keyword>
<keyword id="KW-1185">Reference proteome</keyword>
<keyword id="KW-0732">Signal</keyword>
<evidence type="ECO:0000255" key="1">
    <source>
        <dbReference type="PROSITE-ProRule" id="PRU00303"/>
    </source>
</evidence>
<evidence type="ECO:0000305" key="2"/>
<reference key="1">
    <citation type="journal article" date="2002" name="Nucleic Acids Res.">
        <title>Genome sequence of Shigella flexneri 2a: insights into pathogenicity through comparison with genomes of Escherichia coli K12 and O157.</title>
        <authorList>
            <person name="Jin Q."/>
            <person name="Yuan Z."/>
            <person name="Xu J."/>
            <person name="Wang Y."/>
            <person name="Shen Y."/>
            <person name="Lu W."/>
            <person name="Wang J."/>
            <person name="Liu H."/>
            <person name="Yang J."/>
            <person name="Yang F."/>
            <person name="Zhang X."/>
            <person name="Zhang J."/>
            <person name="Yang G."/>
            <person name="Wu H."/>
            <person name="Qu D."/>
            <person name="Dong J."/>
            <person name="Sun L."/>
            <person name="Xue Y."/>
            <person name="Zhao A."/>
            <person name="Gao Y."/>
            <person name="Zhu J."/>
            <person name="Kan B."/>
            <person name="Ding K."/>
            <person name="Chen S."/>
            <person name="Cheng H."/>
            <person name="Yao Z."/>
            <person name="He B."/>
            <person name="Chen R."/>
            <person name="Ma D."/>
            <person name="Qiang B."/>
            <person name="Wen Y."/>
            <person name="Hou Y."/>
            <person name="Yu J."/>
        </authorList>
    </citation>
    <scope>NUCLEOTIDE SEQUENCE [LARGE SCALE GENOMIC DNA]</scope>
    <source>
        <strain>301 / Serotype 2a</strain>
    </source>
</reference>
<reference key="2">
    <citation type="journal article" date="2003" name="Infect. Immun.">
        <title>Complete genome sequence and comparative genomics of Shigella flexneri serotype 2a strain 2457T.</title>
        <authorList>
            <person name="Wei J."/>
            <person name="Goldberg M.B."/>
            <person name="Burland V."/>
            <person name="Venkatesan M.M."/>
            <person name="Deng W."/>
            <person name="Fournier G."/>
            <person name="Mayhew G.F."/>
            <person name="Plunkett G. III"/>
            <person name="Rose D.J."/>
            <person name="Darling A."/>
            <person name="Mau B."/>
            <person name="Perna N.T."/>
            <person name="Payne S.M."/>
            <person name="Runyen-Janecky L.J."/>
            <person name="Zhou S."/>
            <person name="Schwartz D.C."/>
            <person name="Blattner F.R."/>
        </authorList>
    </citation>
    <scope>NUCLEOTIDE SEQUENCE [LARGE SCALE GENOMIC DNA]</scope>
    <source>
        <strain>ATCC 700930 / 2457T / Serotype 2a</strain>
    </source>
</reference>